<keyword id="KW-1048">Host nucleus</keyword>
<comment type="subcellular location">
    <subcellularLocation>
        <location>Host nucleus</location>
        <location>Host nucleolus</location>
    </subcellularLocation>
</comment>
<reference key="1">
    <citation type="journal article" date="1993" name="J. Virol.">
        <title>Identification of a new transcriptional unit that yields a gene product within the unique sequences of the short component of the herpes simplex virus 1 genome.</title>
        <authorList>
            <person name="Georgopoulou U."/>
            <person name="Michaelidou A."/>
            <person name="Roizman B."/>
            <person name="Mavromara-Nazos P."/>
        </authorList>
    </citation>
    <scope>NUCLEOTIDE SEQUENCE [GENOMIC DNA]</scope>
</reference>
<organism>
    <name type="scientific">Human herpesvirus 1 (strain F)</name>
    <name type="common">HHV-1</name>
    <name type="synonym">Human herpes simplex virus 1</name>
    <dbReference type="NCBI Taxonomy" id="10304"/>
    <lineage>
        <taxon>Viruses</taxon>
        <taxon>Duplodnaviria</taxon>
        <taxon>Heunggongvirae</taxon>
        <taxon>Peploviricota</taxon>
        <taxon>Herviviricetes</taxon>
        <taxon>Herpesvirales</taxon>
        <taxon>Orthoherpesviridae</taxon>
        <taxon>Alphaherpesvirinae</taxon>
        <taxon>Simplexvirus</taxon>
        <taxon>Simplexvirus humanalpha1</taxon>
        <taxon>Human herpesvirus 1</taxon>
    </lineage>
</organism>
<proteinExistence type="predicted"/>
<organismHost>
    <name type="scientific">Homo sapiens</name>
    <name type="common">Human</name>
    <dbReference type="NCBI Taxonomy" id="9606"/>
</organismHost>
<evidence type="ECO:0000256" key="1">
    <source>
        <dbReference type="SAM" id="MobiDB-lite"/>
    </source>
</evidence>
<accession>Q86625</accession>
<sequence length="151" mass="15944">MDPALRSYHQRLRLYTPVAMGINLAASSQPLDPEGPIAVTPRPPIRPSSGKAPHPEAPRRSPNWATAGEVDVGDELIAISDERGPPRHDRPPLATSTAPSPHPRPPGYTAVVSPMALQAVDAPSLFVAWLAARWLRGASGLGASCVGLRGM</sequence>
<dbReference type="EMBL" id="S62895">
    <property type="protein sequence ID" value="AAB27081.1"/>
    <property type="molecule type" value="Genomic_DNA"/>
</dbReference>
<dbReference type="PIR" id="B45696">
    <property type="entry name" value="B45696"/>
</dbReference>
<dbReference type="GO" id="GO:0044196">
    <property type="term" value="C:host cell nucleolus"/>
    <property type="evidence" value="ECO:0007669"/>
    <property type="project" value="UniProtKB-SubCell"/>
</dbReference>
<dbReference type="InterPro" id="IPR017377">
    <property type="entry name" value="Herpes_US8A"/>
</dbReference>
<dbReference type="PIRSF" id="PIRSF038076">
    <property type="entry name" value="US8A"/>
    <property type="match status" value="1"/>
</dbReference>
<gene>
    <name type="primary">US8.5</name>
</gene>
<feature type="chain" id="PRO_0000116144" description="US8.5 protein">
    <location>
        <begin position="1"/>
        <end position="151"/>
    </location>
</feature>
<feature type="region of interest" description="Disordered" evidence="1">
    <location>
        <begin position="27"/>
        <end position="107"/>
    </location>
</feature>
<feature type="compositionally biased region" description="Basic and acidic residues" evidence="1">
    <location>
        <begin position="80"/>
        <end position="91"/>
    </location>
</feature>
<protein>
    <recommendedName>
        <fullName>US8.5 protein</fullName>
    </recommendedName>
</protein>
<name>US8A_HHV1F</name>